<name>UREG_STAEQ</name>
<organism>
    <name type="scientific">Staphylococcus epidermidis (strain ATCC 35984 / DSM 28319 / BCRC 17069 / CCUG 31568 / BM 3577 / RP62A)</name>
    <dbReference type="NCBI Taxonomy" id="176279"/>
    <lineage>
        <taxon>Bacteria</taxon>
        <taxon>Bacillati</taxon>
        <taxon>Bacillota</taxon>
        <taxon>Bacilli</taxon>
        <taxon>Bacillales</taxon>
        <taxon>Staphylococcaceae</taxon>
        <taxon>Staphylococcus</taxon>
    </lineage>
</organism>
<feature type="chain" id="PRO_1000145236" description="Urease accessory protein UreG">
    <location>
        <begin position="1"/>
        <end position="204"/>
    </location>
</feature>
<feature type="binding site" evidence="1">
    <location>
        <begin position="11"/>
        <end position="18"/>
    </location>
    <ligand>
        <name>GTP</name>
        <dbReference type="ChEBI" id="CHEBI:37565"/>
    </ligand>
</feature>
<protein>
    <recommendedName>
        <fullName evidence="1">Urease accessory protein UreG</fullName>
    </recommendedName>
</protein>
<dbReference type="EMBL" id="CP000029">
    <property type="protein sequence ID" value="AAW55246.1"/>
    <property type="molecule type" value="Genomic_DNA"/>
</dbReference>
<dbReference type="RefSeq" id="WP_001832410.1">
    <property type="nucleotide sequence ID" value="NC_002976.3"/>
</dbReference>
<dbReference type="SMR" id="Q5HLV8"/>
<dbReference type="STRING" id="176279.SERP1874"/>
<dbReference type="GeneID" id="50018033"/>
<dbReference type="KEGG" id="ser:SERP1874"/>
<dbReference type="eggNOG" id="COG0378">
    <property type="taxonomic scope" value="Bacteria"/>
</dbReference>
<dbReference type="HOGENOM" id="CLU_072144_1_0_9"/>
<dbReference type="Proteomes" id="UP000000531">
    <property type="component" value="Chromosome"/>
</dbReference>
<dbReference type="GO" id="GO:0005737">
    <property type="term" value="C:cytoplasm"/>
    <property type="evidence" value="ECO:0007669"/>
    <property type="project" value="UniProtKB-SubCell"/>
</dbReference>
<dbReference type="GO" id="GO:0005525">
    <property type="term" value="F:GTP binding"/>
    <property type="evidence" value="ECO:0007669"/>
    <property type="project" value="UniProtKB-KW"/>
</dbReference>
<dbReference type="GO" id="GO:0003924">
    <property type="term" value="F:GTPase activity"/>
    <property type="evidence" value="ECO:0007669"/>
    <property type="project" value="InterPro"/>
</dbReference>
<dbReference type="GO" id="GO:0016151">
    <property type="term" value="F:nickel cation binding"/>
    <property type="evidence" value="ECO:0007669"/>
    <property type="project" value="UniProtKB-UniRule"/>
</dbReference>
<dbReference type="GO" id="GO:0043419">
    <property type="term" value="P:urea catabolic process"/>
    <property type="evidence" value="ECO:0007669"/>
    <property type="project" value="InterPro"/>
</dbReference>
<dbReference type="CDD" id="cd05540">
    <property type="entry name" value="UreG"/>
    <property type="match status" value="1"/>
</dbReference>
<dbReference type="Gene3D" id="3.40.50.300">
    <property type="entry name" value="P-loop containing nucleotide triphosphate hydrolases"/>
    <property type="match status" value="1"/>
</dbReference>
<dbReference type="HAMAP" id="MF_01389">
    <property type="entry name" value="UreG"/>
    <property type="match status" value="1"/>
</dbReference>
<dbReference type="InterPro" id="IPR003495">
    <property type="entry name" value="CobW/HypB/UreG_nucleotide-bd"/>
</dbReference>
<dbReference type="InterPro" id="IPR027417">
    <property type="entry name" value="P-loop_NTPase"/>
</dbReference>
<dbReference type="InterPro" id="IPR004400">
    <property type="entry name" value="UreG"/>
</dbReference>
<dbReference type="NCBIfam" id="TIGR00101">
    <property type="entry name" value="ureG"/>
    <property type="match status" value="1"/>
</dbReference>
<dbReference type="PANTHER" id="PTHR31715">
    <property type="entry name" value="UREASE ACCESSORY PROTEIN G"/>
    <property type="match status" value="1"/>
</dbReference>
<dbReference type="PANTHER" id="PTHR31715:SF0">
    <property type="entry name" value="UREASE ACCESSORY PROTEIN G"/>
    <property type="match status" value="1"/>
</dbReference>
<dbReference type="Pfam" id="PF02492">
    <property type="entry name" value="cobW"/>
    <property type="match status" value="1"/>
</dbReference>
<dbReference type="PIRSF" id="PIRSF005624">
    <property type="entry name" value="Ni-bind_GTPase"/>
    <property type="match status" value="1"/>
</dbReference>
<dbReference type="SUPFAM" id="SSF52540">
    <property type="entry name" value="P-loop containing nucleoside triphosphate hydrolases"/>
    <property type="match status" value="1"/>
</dbReference>
<sequence>MSNPIKIGIGGPVGAGKTQLIEKVVKRLAKKMSIGVITNDIYTKEDEKILVNTGVLPEDRIIGVETGGCPHTAIREDASMNFAAIDELLERNDDIELIFIESGGDNLAATFSPELVDFSIYIIDVAQGEKIPRKGGQGMIKSDFFIINKTDLAPYVGASLDQMAKDTEVFRGNHPFAFTNLKTDEGLEKVIEWIEHDVLLKGLT</sequence>
<accession>Q5HLV8</accession>
<reference key="1">
    <citation type="journal article" date="2005" name="J. Bacteriol.">
        <title>Insights on evolution of virulence and resistance from the complete genome analysis of an early methicillin-resistant Staphylococcus aureus strain and a biofilm-producing methicillin-resistant Staphylococcus epidermidis strain.</title>
        <authorList>
            <person name="Gill S.R."/>
            <person name="Fouts D.E."/>
            <person name="Archer G.L."/>
            <person name="Mongodin E.F."/>
            <person name="DeBoy R.T."/>
            <person name="Ravel J."/>
            <person name="Paulsen I.T."/>
            <person name="Kolonay J.F."/>
            <person name="Brinkac L.M."/>
            <person name="Beanan M.J."/>
            <person name="Dodson R.J."/>
            <person name="Daugherty S.C."/>
            <person name="Madupu R."/>
            <person name="Angiuoli S.V."/>
            <person name="Durkin A.S."/>
            <person name="Haft D.H."/>
            <person name="Vamathevan J.J."/>
            <person name="Khouri H."/>
            <person name="Utterback T.R."/>
            <person name="Lee C."/>
            <person name="Dimitrov G."/>
            <person name="Jiang L."/>
            <person name="Qin H."/>
            <person name="Weidman J."/>
            <person name="Tran K."/>
            <person name="Kang K.H."/>
            <person name="Hance I.R."/>
            <person name="Nelson K.E."/>
            <person name="Fraser C.M."/>
        </authorList>
    </citation>
    <scope>NUCLEOTIDE SEQUENCE [LARGE SCALE GENOMIC DNA]</scope>
    <source>
        <strain>ATCC 35984 / DSM 28319 / BCRC 17069 / CCUG 31568 / BM 3577 / RP62A</strain>
    </source>
</reference>
<evidence type="ECO:0000255" key="1">
    <source>
        <dbReference type="HAMAP-Rule" id="MF_01389"/>
    </source>
</evidence>
<proteinExistence type="inferred from homology"/>
<comment type="function">
    <text evidence="1">Facilitates the functional incorporation of the urease nickel metallocenter. This process requires GTP hydrolysis, probably effectuated by UreG.</text>
</comment>
<comment type="subunit">
    <text evidence="1">Homodimer. UreD, UreF and UreG form a complex that acts as a GTP-hydrolysis-dependent molecular chaperone, activating the urease apoprotein by helping to assemble the nickel containing metallocenter of UreC. The UreE protein probably delivers the nickel.</text>
</comment>
<comment type="subcellular location">
    <subcellularLocation>
        <location evidence="1">Cytoplasm</location>
    </subcellularLocation>
</comment>
<comment type="similarity">
    <text evidence="1">Belongs to the SIMIBI class G3E GTPase family. UreG subfamily.</text>
</comment>
<gene>
    <name evidence="1" type="primary">ureG</name>
    <name type="ordered locus">SERP1874</name>
</gene>
<keyword id="KW-0143">Chaperone</keyword>
<keyword id="KW-0963">Cytoplasm</keyword>
<keyword id="KW-0342">GTP-binding</keyword>
<keyword id="KW-0996">Nickel insertion</keyword>
<keyword id="KW-0547">Nucleotide-binding</keyword>
<keyword id="KW-1185">Reference proteome</keyword>